<accession>Q7VNH6</accession>
<organism>
    <name type="scientific">Haemophilus ducreyi (strain 35000HP / ATCC 700724)</name>
    <dbReference type="NCBI Taxonomy" id="233412"/>
    <lineage>
        <taxon>Bacteria</taxon>
        <taxon>Pseudomonadati</taxon>
        <taxon>Pseudomonadota</taxon>
        <taxon>Gammaproteobacteria</taxon>
        <taxon>Pasteurellales</taxon>
        <taxon>Pasteurellaceae</taxon>
        <taxon>Haemophilus</taxon>
    </lineage>
</organism>
<proteinExistence type="inferred from homology"/>
<comment type="function">
    <text evidence="1">Catalyzes the ATP-dependent conversion of 7-carboxy-7-deazaguanine (CDG) to 7-cyano-7-deazaguanine (preQ(0)).</text>
</comment>
<comment type="catalytic activity">
    <reaction evidence="1">
        <text>7-carboxy-7-deazaguanine + NH4(+) + ATP = 7-cyano-7-deazaguanine + ADP + phosphate + H2O + H(+)</text>
        <dbReference type="Rhea" id="RHEA:27982"/>
        <dbReference type="ChEBI" id="CHEBI:15377"/>
        <dbReference type="ChEBI" id="CHEBI:15378"/>
        <dbReference type="ChEBI" id="CHEBI:28938"/>
        <dbReference type="ChEBI" id="CHEBI:30616"/>
        <dbReference type="ChEBI" id="CHEBI:43474"/>
        <dbReference type="ChEBI" id="CHEBI:45075"/>
        <dbReference type="ChEBI" id="CHEBI:61036"/>
        <dbReference type="ChEBI" id="CHEBI:456216"/>
        <dbReference type="EC" id="6.3.4.20"/>
    </reaction>
</comment>
<comment type="cofactor">
    <cofactor evidence="1">
        <name>Zn(2+)</name>
        <dbReference type="ChEBI" id="CHEBI:29105"/>
    </cofactor>
    <text evidence="1">Binds 1 zinc ion per subunit.</text>
</comment>
<comment type="pathway">
    <text evidence="1">Purine metabolism; 7-cyano-7-deazaguanine biosynthesis.</text>
</comment>
<comment type="similarity">
    <text evidence="1">Belongs to the QueC family.</text>
</comment>
<dbReference type="EC" id="6.3.4.20" evidence="1"/>
<dbReference type="EMBL" id="AE017143">
    <property type="protein sequence ID" value="AAP95494.1"/>
    <property type="molecule type" value="Genomic_DNA"/>
</dbReference>
<dbReference type="RefSeq" id="WP_010944547.1">
    <property type="nucleotide sequence ID" value="NC_002940.2"/>
</dbReference>
<dbReference type="SMR" id="Q7VNH6"/>
<dbReference type="STRING" id="233412.HD_0558"/>
<dbReference type="DNASU" id="1490532"/>
<dbReference type="KEGG" id="hdu:HD_0558"/>
<dbReference type="eggNOG" id="COG0603">
    <property type="taxonomic scope" value="Bacteria"/>
</dbReference>
<dbReference type="HOGENOM" id="CLU_081854_0_0_6"/>
<dbReference type="OrthoDB" id="9789567at2"/>
<dbReference type="UniPathway" id="UPA00391"/>
<dbReference type="Proteomes" id="UP000001022">
    <property type="component" value="Chromosome"/>
</dbReference>
<dbReference type="GO" id="GO:0005524">
    <property type="term" value="F:ATP binding"/>
    <property type="evidence" value="ECO:0007669"/>
    <property type="project" value="UniProtKB-UniRule"/>
</dbReference>
<dbReference type="GO" id="GO:0016879">
    <property type="term" value="F:ligase activity, forming carbon-nitrogen bonds"/>
    <property type="evidence" value="ECO:0007669"/>
    <property type="project" value="UniProtKB-UniRule"/>
</dbReference>
<dbReference type="GO" id="GO:0008270">
    <property type="term" value="F:zinc ion binding"/>
    <property type="evidence" value="ECO:0007669"/>
    <property type="project" value="UniProtKB-UniRule"/>
</dbReference>
<dbReference type="GO" id="GO:0008616">
    <property type="term" value="P:queuosine biosynthetic process"/>
    <property type="evidence" value="ECO:0007669"/>
    <property type="project" value="UniProtKB-UniRule"/>
</dbReference>
<dbReference type="CDD" id="cd01995">
    <property type="entry name" value="QueC-like"/>
    <property type="match status" value="1"/>
</dbReference>
<dbReference type="Gene3D" id="3.40.50.620">
    <property type="entry name" value="HUPs"/>
    <property type="match status" value="1"/>
</dbReference>
<dbReference type="HAMAP" id="MF_01633">
    <property type="entry name" value="QueC"/>
    <property type="match status" value="1"/>
</dbReference>
<dbReference type="InterPro" id="IPR018317">
    <property type="entry name" value="QueC"/>
</dbReference>
<dbReference type="InterPro" id="IPR014729">
    <property type="entry name" value="Rossmann-like_a/b/a_fold"/>
</dbReference>
<dbReference type="NCBIfam" id="TIGR00364">
    <property type="entry name" value="7-cyano-7-deazaguanine synthase QueC"/>
    <property type="match status" value="1"/>
</dbReference>
<dbReference type="PANTHER" id="PTHR42914">
    <property type="entry name" value="7-CYANO-7-DEAZAGUANINE SYNTHASE"/>
    <property type="match status" value="1"/>
</dbReference>
<dbReference type="PANTHER" id="PTHR42914:SF1">
    <property type="entry name" value="7-CYANO-7-DEAZAGUANINE SYNTHASE"/>
    <property type="match status" value="1"/>
</dbReference>
<dbReference type="Pfam" id="PF06508">
    <property type="entry name" value="QueC"/>
    <property type="match status" value="1"/>
</dbReference>
<dbReference type="PIRSF" id="PIRSF006293">
    <property type="entry name" value="ExsB"/>
    <property type="match status" value="1"/>
</dbReference>
<dbReference type="SUPFAM" id="SSF52402">
    <property type="entry name" value="Adenine nucleotide alpha hydrolases-like"/>
    <property type="match status" value="1"/>
</dbReference>
<name>QUEC_HAEDU</name>
<keyword id="KW-0067">ATP-binding</keyword>
<keyword id="KW-0436">Ligase</keyword>
<keyword id="KW-0479">Metal-binding</keyword>
<keyword id="KW-0547">Nucleotide-binding</keyword>
<keyword id="KW-0671">Queuosine biosynthesis</keyword>
<keyword id="KW-1185">Reference proteome</keyword>
<keyword id="KW-0862">Zinc</keyword>
<gene>
    <name evidence="1" type="primary">queC</name>
    <name type="ordered locus">HD_0558</name>
</gene>
<sequence>MNRSTRSHKAIVIFSGGQDSTTCLFQAIQEFKRENVEVITFQYGQRHSIELEKAAWIAQNLGIKQTVIDTSVIKAITTNALITEATIKQDGDKPNTFVDGRNALFLLYTAIYAKGQGIQTIFTGVCETDFSGYPDCRDIFIKSMNVTLNLAMDYNFNIRTPLMYLTKKQTWALADQLGAFEYVREHTHTCYLGVEGGCHTCPSCLLREKGLNEYLAEKSGEKNV</sequence>
<protein>
    <recommendedName>
        <fullName evidence="1">7-cyano-7-deazaguanine synthase</fullName>
        <ecNumber evidence="1">6.3.4.20</ecNumber>
    </recommendedName>
    <alternativeName>
        <fullName evidence="1">7-cyano-7-carbaguanine synthase</fullName>
    </alternativeName>
    <alternativeName>
        <fullName evidence="1">PreQ(0) synthase</fullName>
    </alternativeName>
    <alternativeName>
        <fullName evidence="1">Queuosine biosynthesis protein QueC</fullName>
    </alternativeName>
</protein>
<feature type="chain" id="PRO_0000246849" description="7-cyano-7-deazaguanine synthase">
    <location>
        <begin position="1"/>
        <end position="224"/>
    </location>
</feature>
<feature type="binding site" evidence="1">
    <location>
        <begin position="14"/>
        <end position="24"/>
    </location>
    <ligand>
        <name>ATP</name>
        <dbReference type="ChEBI" id="CHEBI:30616"/>
    </ligand>
</feature>
<feature type="binding site" evidence="1">
    <location>
        <position position="190"/>
    </location>
    <ligand>
        <name>Zn(2+)</name>
        <dbReference type="ChEBI" id="CHEBI:29105"/>
    </ligand>
</feature>
<feature type="binding site" evidence="1">
    <location>
        <position position="198"/>
    </location>
    <ligand>
        <name>Zn(2+)</name>
        <dbReference type="ChEBI" id="CHEBI:29105"/>
    </ligand>
</feature>
<feature type="binding site" evidence="1">
    <location>
        <position position="201"/>
    </location>
    <ligand>
        <name>Zn(2+)</name>
        <dbReference type="ChEBI" id="CHEBI:29105"/>
    </ligand>
</feature>
<feature type="binding site" evidence="1">
    <location>
        <position position="204"/>
    </location>
    <ligand>
        <name>Zn(2+)</name>
        <dbReference type="ChEBI" id="CHEBI:29105"/>
    </ligand>
</feature>
<evidence type="ECO:0000255" key="1">
    <source>
        <dbReference type="HAMAP-Rule" id="MF_01633"/>
    </source>
</evidence>
<reference key="1">
    <citation type="submission" date="2003-06" db="EMBL/GenBank/DDBJ databases">
        <title>The complete genome sequence of Haemophilus ducreyi.</title>
        <authorList>
            <person name="Munson R.S. Jr."/>
            <person name="Ray W.C."/>
            <person name="Mahairas G."/>
            <person name="Sabo P."/>
            <person name="Mungur R."/>
            <person name="Johnson L."/>
            <person name="Nguyen D."/>
            <person name="Wang J."/>
            <person name="Forst C."/>
            <person name="Hood L."/>
        </authorList>
    </citation>
    <scope>NUCLEOTIDE SEQUENCE [LARGE SCALE GENOMIC DNA]</scope>
    <source>
        <strain>35000HP / ATCC 700724</strain>
    </source>
</reference>